<gene>
    <name evidence="1" type="primary">thrB</name>
    <name type="ordered locus">SSP1436</name>
</gene>
<evidence type="ECO:0000255" key="1">
    <source>
        <dbReference type="HAMAP-Rule" id="MF_00384"/>
    </source>
</evidence>
<comment type="function">
    <text evidence="1">Catalyzes the ATP-dependent phosphorylation of L-homoserine to L-homoserine phosphate.</text>
</comment>
<comment type="catalytic activity">
    <reaction evidence="1">
        <text>L-homoserine + ATP = O-phospho-L-homoserine + ADP + H(+)</text>
        <dbReference type="Rhea" id="RHEA:13985"/>
        <dbReference type="ChEBI" id="CHEBI:15378"/>
        <dbReference type="ChEBI" id="CHEBI:30616"/>
        <dbReference type="ChEBI" id="CHEBI:57476"/>
        <dbReference type="ChEBI" id="CHEBI:57590"/>
        <dbReference type="ChEBI" id="CHEBI:456216"/>
        <dbReference type="EC" id="2.7.1.39"/>
    </reaction>
</comment>
<comment type="pathway">
    <text evidence="1">Amino-acid biosynthesis; L-threonine biosynthesis; L-threonine from L-aspartate: step 4/5.</text>
</comment>
<comment type="subcellular location">
    <subcellularLocation>
        <location evidence="1">Cytoplasm</location>
    </subcellularLocation>
</comment>
<comment type="similarity">
    <text evidence="1">Belongs to the GHMP kinase family. Homoserine kinase subfamily.</text>
</comment>
<keyword id="KW-0028">Amino-acid biosynthesis</keyword>
<keyword id="KW-0067">ATP-binding</keyword>
<keyword id="KW-0963">Cytoplasm</keyword>
<keyword id="KW-0418">Kinase</keyword>
<keyword id="KW-0547">Nucleotide-binding</keyword>
<keyword id="KW-1185">Reference proteome</keyword>
<keyword id="KW-0791">Threonine biosynthesis</keyword>
<keyword id="KW-0808">Transferase</keyword>
<feature type="chain" id="PRO_0000156613" description="Homoserine kinase">
    <location>
        <begin position="1"/>
        <end position="305"/>
    </location>
</feature>
<feature type="binding site" evidence="1">
    <location>
        <begin position="90"/>
        <end position="100"/>
    </location>
    <ligand>
        <name>ATP</name>
        <dbReference type="ChEBI" id="CHEBI:30616"/>
    </ligand>
</feature>
<reference key="1">
    <citation type="journal article" date="2005" name="Proc. Natl. Acad. Sci. U.S.A.">
        <title>Whole genome sequence of Staphylococcus saprophyticus reveals the pathogenesis of uncomplicated urinary tract infection.</title>
        <authorList>
            <person name="Kuroda M."/>
            <person name="Yamashita A."/>
            <person name="Hirakawa H."/>
            <person name="Kumano M."/>
            <person name="Morikawa K."/>
            <person name="Higashide M."/>
            <person name="Maruyama A."/>
            <person name="Inose Y."/>
            <person name="Matoba K."/>
            <person name="Toh H."/>
            <person name="Kuhara S."/>
            <person name="Hattori M."/>
            <person name="Ohta T."/>
        </authorList>
    </citation>
    <scope>NUCLEOTIDE SEQUENCE [LARGE SCALE GENOMIC DNA]</scope>
    <source>
        <strain>ATCC 15305 / DSM 20229 / NCIMB 8711 / NCTC 7292 / S-41</strain>
    </source>
</reference>
<proteinExistence type="inferred from homology"/>
<dbReference type="EC" id="2.7.1.39" evidence="1"/>
<dbReference type="EMBL" id="AP008934">
    <property type="protein sequence ID" value="BAE18581.1"/>
    <property type="molecule type" value="Genomic_DNA"/>
</dbReference>
<dbReference type="RefSeq" id="WP_002483395.1">
    <property type="nucleotide sequence ID" value="NZ_MTGA01000034.1"/>
</dbReference>
<dbReference type="SMR" id="Q49XB7"/>
<dbReference type="GeneID" id="3615375"/>
<dbReference type="KEGG" id="ssp:SSP1436"/>
<dbReference type="PATRIC" id="fig|342451.11.peg.1440"/>
<dbReference type="eggNOG" id="COG0083">
    <property type="taxonomic scope" value="Bacteria"/>
</dbReference>
<dbReference type="HOGENOM" id="CLU_041243_0_0_9"/>
<dbReference type="OrthoDB" id="9769912at2"/>
<dbReference type="UniPathway" id="UPA00050">
    <property type="reaction ID" value="UER00064"/>
</dbReference>
<dbReference type="Proteomes" id="UP000006371">
    <property type="component" value="Chromosome"/>
</dbReference>
<dbReference type="GO" id="GO:0005737">
    <property type="term" value="C:cytoplasm"/>
    <property type="evidence" value="ECO:0007669"/>
    <property type="project" value="UniProtKB-SubCell"/>
</dbReference>
<dbReference type="GO" id="GO:0005524">
    <property type="term" value="F:ATP binding"/>
    <property type="evidence" value="ECO:0007669"/>
    <property type="project" value="UniProtKB-UniRule"/>
</dbReference>
<dbReference type="GO" id="GO:0004413">
    <property type="term" value="F:homoserine kinase activity"/>
    <property type="evidence" value="ECO:0007669"/>
    <property type="project" value="UniProtKB-UniRule"/>
</dbReference>
<dbReference type="GO" id="GO:0009088">
    <property type="term" value="P:threonine biosynthetic process"/>
    <property type="evidence" value="ECO:0007669"/>
    <property type="project" value="UniProtKB-UniRule"/>
</dbReference>
<dbReference type="Gene3D" id="3.30.230.10">
    <property type="match status" value="1"/>
</dbReference>
<dbReference type="Gene3D" id="3.30.70.890">
    <property type="entry name" value="GHMP kinase, C-terminal domain"/>
    <property type="match status" value="1"/>
</dbReference>
<dbReference type="HAMAP" id="MF_00384">
    <property type="entry name" value="Homoser_kinase"/>
    <property type="match status" value="1"/>
</dbReference>
<dbReference type="InterPro" id="IPR013750">
    <property type="entry name" value="GHMP_kinase_C_dom"/>
</dbReference>
<dbReference type="InterPro" id="IPR036554">
    <property type="entry name" value="GHMP_kinase_C_sf"/>
</dbReference>
<dbReference type="InterPro" id="IPR006204">
    <property type="entry name" value="GHMP_kinase_N_dom"/>
</dbReference>
<dbReference type="InterPro" id="IPR006203">
    <property type="entry name" value="GHMP_knse_ATP-bd_CS"/>
</dbReference>
<dbReference type="InterPro" id="IPR000870">
    <property type="entry name" value="Homoserine_kinase"/>
</dbReference>
<dbReference type="InterPro" id="IPR020568">
    <property type="entry name" value="Ribosomal_Su5_D2-typ_SF"/>
</dbReference>
<dbReference type="InterPro" id="IPR014721">
    <property type="entry name" value="Ribsml_uS5_D2-typ_fold_subgr"/>
</dbReference>
<dbReference type="NCBIfam" id="TIGR00191">
    <property type="entry name" value="thrB"/>
    <property type="match status" value="1"/>
</dbReference>
<dbReference type="PANTHER" id="PTHR20861:SF1">
    <property type="entry name" value="HOMOSERINE KINASE"/>
    <property type="match status" value="1"/>
</dbReference>
<dbReference type="PANTHER" id="PTHR20861">
    <property type="entry name" value="HOMOSERINE/4-DIPHOSPHOCYTIDYL-2-C-METHYL-D-ERYTHRITOL KINASE"/>
    <property type="match status" value="1"/>
</dbReference>
<dbReference type="Pfam" id="PF08544">
    <property type="entry name" value="GHMP_kinases_C"/>
    <property type="match status" value="1"/>
</dbReference>
<dbReference type="Pfam" id="PF00288">
    <property type="entry name" value="GHMP_kinases_N"/>
    <property type="match status" value="1"/>
</dbReference>
<dbReference type="PIRSF" id="PIRSF000676">
    <property type="entry name" value="Homoser_kin"/>
    <property type="match status" value="1"/>
</dbReference>
<dbReference type="PRINTS" id="PR00958">
    <property type="entry name" value="HOMSERKINASE"/>
</dbReference>
<dbReference type="SUPFAM" id="SSF55060">
    <property type="entry name" value="GHMP Kinase, C-terminal domain"/>
    <property type="match status" value="1"/>
</dbReference>
<dbReference type="SUPFAM" id="SSF54211">
    <property type="entry name" value="Ribosomal protein S5 domain 2-like"/>
    <property type="match status" value="1"/>
</dbReference>
<dbReference type="PROSITE" id="PS00627">
    <property type="entry name" value="GHMP_KINASES_ATP"/>
    <property type="match status" value="1"/>
</dbReference>
<sequence>MKEALHLKIPASTANLGVGFDSIGMALNKFLYLDVTVNDEDQWSFNHIGPNVDELPNDESHYIYQIAQKVAETYEVELPNLNVEMRSEIPLARGLGSSASALVGALYIANYFGDIELSKYELLQLATDFEGHPDNVAPTIYGGLVLGYYNGDTKVTDVSYIDTPKVDIIITIPSYKLKTIDARNALPDTFSHEKAVQNSAISNTMISALIQHNYELAGKMMEQDGFHEPYRQHLIPEFQTIKGIAKQHLAYATVISGAGPTVLTLIAPERSGELVRALKREFKDCRSELVTINETGVTTKVLYQR</sequence>
<protein>
    <recommendedName>
        <fullName evidence="1">Homoserine kinase</fullName>
        <shortName evidence="1">HK</shortName>
        <shortName evidence="1">HSK</shortName>
        <ecNumber evidence="1">2.7.1.39</ecNumber>
    </recommendedName>
</protein>
<name>KHSE_STAS1</name>
<organism>
    <name type="scientific">Staphylococcus saprophyticus subsp. saprophyticus (strain ATCC 15305 / DSM 20229 / NCIMB 8711 / NCTC 7292 / S-41)</name>
    <dbReference type="NCBI Taxonomy" id="342451"/>
    <lineage>
        <taxon>Bacteria</taxon>
        <taxon>Bacillati</taxon>
        <taxon>Bacillota</taxon>
        <taxon>Bacilli</taxon>
        <taxon>Bacillales</taxon>
        <taxon>Staphylococcaceae</taxon>
        <taxon>Staphylococcus</taxon>
    </lineage>
</organism>
<accession>Q49XB7</accession>